<proteinExistence type="inferred from homology"/>
<organism>
    <name type="scientific">Shewanella putrefaciens (strain CN-32 / ATCC BAA-453)</name>
    <dbReference type="NCBI Taxonomy" id="319224"/>
    <lineage>
        <taxon>Bacteria</taxon>
        <taxon>Pseudomonadati</taxon>
        <taxon>Pseudomonadota</taxon>
        <taxon>Gammaproteobacteria</taxon>
        <taxon>Alteromonadales</taxon>
        <taxon>Shewanellaceae</taxon>
        <taxon>Shewanella</taxon>
    </lineage>
</organism>
<dbReference type="EC" id="3.2.1.-"/>
<dbReference type="EMBL" id="CP000681">
    <property type="protein sequence ID" value="ABP76211.1"/>
    <property type="molecule type" value="Genomic_DNA"/>
</dbReference>
<dbReference type="SMR" id="A4Y8C8"/>
<dbReference type="STRING" id="319224.Sputcn32_2490"/>
<dbReference type="CAZy" id="GH109">
    <property type="family name" value="Glycoside Hydrolase Family 109"/>
</dbReference>
<dbReference type="KEGG" id="spc:Sputcn32_2490"/>
<dbReference type="eggNOG" id="COG0673">
    <property type="taxonomic scope" value="Bacteria"/>
</dbReference>
<dbReference type="HOGENOM" id="CLU_046965_0_0_6"/>
<dbReference type="GO" id="GO:0016798">
    <property type="term" value="F:hydrolase activity, acting on glycosyl bonds"/>
    <property type="evidence" value="ECO:0007669"/>
    <property type="project" value="UniProtKB-KW"/>
</dbReference>
<dbReference type="GO" id="GO:0000166">
    <property type="term" value="F:nucleotide binding"/>
    <property type="evidence" value="ECO:0007669"/>
    <property type="project" value="InterPro"/>
</dbReference>
<dbReference type="Gene3D" id="3.30.360.10">
    <property type="entry name" value="Dihydrodipicolinate Reductase, domain 2"/>
    <property type="match status" value="1"/>
</dbReference>
<dbReference type="Gene3D" id="3.40.50.720">
    <property type="entry name" value="NAD(P)-binding Rossmann-like Domain"/>
    <property type="match status" value="1"/>
</dbReference>
<dbReference type="InterPro" id="IPR000683">
    <property type="entry name" value="Gfo/Idh/MocA-like_OxRdtase_N"/>
</dbReference>
<dbReference type="InterPro" id="IPR050463">
    <property type="entry name" value="Gfo/Idh/MocA_oxidrdct_glycsds"/>
</dbReference>
<dbReference type="InterPro" id="IPR049303">
    <property type="entry name" value="Glyco_hydro_109_C"/>
</dbReference>
<dbReference type="InterPro" id="IPR036291">
    <property type="entry name" value="NAD(P)-bd_dom_sf"/>
</dbReference>
<dbReference type="InterPro" id="IPR006311">
    <property type="entry name" value="TAT_signal"/>
</dbReference>
<dbReference type="InterPro" id="IPR019546">
    <property type="entry name" value="TAT_signal_bac_arc"/>
</dbReference>
<dbReference type="PANTHER" id="PTHR43818">
    <property type="entry name" value="BCDNA.GH03377"/>
    <property type="match status" value="1"/>
</dbReference>
<dbReference type="PANTHER" id="PTHR43818:SF1">
    <property type="entry name" value="GLYCOSYL HYDROLASE FAMILY 109 PROTEIN"/>
    <property type="match status" value="1"/>
</dbReference>
<dbReference type="Pfam" id="PF01408">
    <property type="entry name" value="GFO_IDH_MocA"/>
    <property type="match status" value="1"/>
</dbReference>
<dbReference type="Pfam" id="PF21252">
    <property type="entry name" value="Glyco_hydro_109_C"/>
    <property type="match status" value="1"/>
</dbReference>
<dbReference type="Pfam" id="PF10518">
    <property type="entry name" value="TAT_signal"/>
    <property type="match status" value="1"/>
</dbReference>
<dbReference type="SUPFAM" id="SSF51735">
    <property type="entry name" value="NAD(P)-binding Rossmann-fold domains"/>
    <property type="match status" value="1"/>
</dbReference>
<dbReference type="PROSITE" id="PS51318">
    <property type="entry name" value="TAT"/>
    <property type="match status" value="1"/>
</dbReference>
<accession>A4Y8C8</accession>
<name>GH109_SHEPC</name>
<keyword id="KW-0326">Glycosidase</keyword>
<keyword id="KW-0378">Hydrolase</keyword>
<keyword id="KW-0520">NAD</keyword>
<keyword id="KW-0732">Signal</keyword>
<sequence length="459" mass="52042">MHNIHRRHFLKAAGAVTAGLITANITASTHANSVAPKPQNGKSVIGLIAPKMDVVRVGFIGVGERGFSHVEQFCHLEGVELKAICDTHQTVIDRAVAHIVKQNRPQPTVYTGDDLSYRDLLSRDDIDIVIISTPWEWHAPMAIETMESGKHAFVEVPLALTVEECWQIVDTAERTQKNCMMMENVNYGREELMVLNMVRQGVFGELLHGEAAYIHELRWQMKEIDHKTGSWRTYWHTKRNGNLYPTHGLGPVSQYMNINRGDRFDYLTSMSSPALGRALYAKREFPADHERNQLKYINGDINTSLIKTVKGRTIMVQHDTTTPRPYSRHNLLQGTNGVFAGFPNRIAVEHGGFGKSYHEWDMDMQKWYDKYDHPLWQRIGKEAEINGGHGGMDFVMLWRMVYCLRNGEALDQDVYDAASWSVVNILSEQSVNNRSNSVTFPDFTRGAWEHAKPLGIVGA</sequence>
<feature type="signal peptide" description="Tat-type signal" evidence="2">
    <location>
        <begin position="1"/>
        <end position="31"/>
    </location>
</feature>
<feature type="chain" id="PRO_5000241619" description="Glycosyl hydrolase family 109 protein">
    <location>
        <begin position="32"/>
        <end position="459"/>
    </location>
</feature>
<feature type="binding site" evidence="1">
    <location>
        <begin position="64"/>
        <end position="65"/>
    </location>
    <ligand>
        <name>NAD(+)</name>
        <dbReference type="ChEBI" id="CHEBI:57540"/>
    </ligand>
</feature>
<feature type="binding site" evidence="1">
    <location>
        <position position="86"/>
    </location>
    <ligand>
        <name>NAD(+)</name>
        <dbReference type="ChEBI" id="CHEBI:57540"/>
    </ligand>
</feature>
<feature type="binding site" evidence="1">
    <location>
        <begin position="135"/>
        <end position="138"/>
    </location>
    <ligand>
        <name>NAD(+)</name>
        <dbReference type="ChEBI" id="CHEBI:57540"/>
    </ligand>
</feature>
<feature type="binding site" evidence="1">
    <location>
        <begin position="155"/>
        <end position="156"/>
    </location>
    <ligand>
        <name>NAD(+)</name>
        <dbReference type="ChEBI" id="CHEBI:57540"/>
    </ligand>
</feature>
<feature type="binding site" evidence="1">
    <location>
        <position position="184"/>
    </location>
    <ligand>
        <name>NAD(+)</name>
        <dbReference type="ChEBI" id="CHEBI:57540"/>
    </ligand>
</feature>
<feature type="binding site" evidence="1">
    <location>
        <position position="213"/>
    </location>
    <ligand>
        <name>substrate</name>
    </ligand>
</feature>
<feature type="binding site" evidence="1">
    <location>
        <position position="232"/>
    </location>
    <ligand>
        <name>substrate</name>
    </ligand>
</feature>
<feature type="binding site" evidence="1">
    <location>
        <begin position="244"/>
        <end position="247"/>
    </location>
    <ligand>
        <name>substrate</name>
    </ligand>
</feature>
<feature type="binding site" evidence="1">
    <location>
        <position position="244"/>
    </location>
    <ligand>
        <name>NAD(+)</name>
        <dbReference type="ChEBI" id="CHEBI:57540"/>
    </ligand>
</feature>
<feature type="binding site" evidence="1">
    <location>
        <position position="326"/>
    </location>
    <ligand>
        <name>substrate</name>
    </ligand>
</feature>
<comment type="function">
    <text evidence="1">Glycosidase.</text>
</comment>
<comment type="cofactor">
    <cofactor evidence="1">
        <name>NAD(+)</name>
        <dbReference type="ChEBI" id="CHEBI:57540"/>
    </cofactor>
    <text evidence="1">Binds 1 NAD(+) per subunit. The NAD(+) cannot dissociate.</text>
</comment>
<comment type="PTM">
    <text>Predicted to be exported by the Tat system. The position of the signal peptide cleavage has not been experimentally proven.</text>
</comment>
<comment type="similarity">
    <text evidence="3">Belongs to the Gfo/Idh/MocA family. Glycosyl hydrolase 109 subfamily.</text>
</comment>
<reference key="1">
    <citation type="submission" date="2007-04" db="EMBL/GenBank/DDBJ databases">
        <title>Complete sequence of Shewanella putrefaciens CN-32.</title>
        <authorList>
            <consortium name="US DOE Joint Genome Institute"/>
            <person name="Copeland A."/>
            <person name="Lucas S."/>
            <person name="Lapidus A."/>
            <person name="Barry K."/>
            <person name="Detter J.C."/>
            <person name="Glavina del Rio T."/>
            <person name="Hammon N."/>
            <person name="Israni S."/>
            <person name="Dalin E."/>
            <person name="Tice H."/>
            <person name="Pitluck S."/>
            <person name="Chain P."/>
            <person name="Malfatti S."/>
            <person name="Shin M."/>
            <person name="Vergez L."/>
            <person name="Schmutz J."/>
            <person name="Larimer F."/>
            <person name="Land M."/>
            <person name="Hauser L."/>
            <person name="Kyrpides N."/>
            <person name="Mikhailova N."/>
            <person name="Romine M.F."/>
            <person name="Fredrickson J."/>
            <person name="Tiedje J."/>
            <person name="Richardson P."/>
        </authorList>
    </citation>
    <scope>NUCLEOTIDE SEQUENCE [LARGE SCALE GENOMIC DNA]</scope>
    <source>
        <strain>CN-32 / ATCC BAA-453</strain>
    </source>
</reference>
<evidence type="ECO:0000250" key="1"/>
<evidence type="ECO:0000255" key="2">
    <source>
        <dbReference type="PROSITE-ProRule" id="PRU00648"/>
    </source>
</evidence>
<evidence type="ECO:0000305" key="3"/>
<protein>
    <recommendedName>
        <fullName>Glycosyl hydrolase family 109 protein</fullName>
        <ecNumber>3.2.1.-</ecNumber>
    </recommendedName>
</protein>
<gene>
    <name type="ordered locus">Sputcn32_2490</name>
</gene>